<accession>Q8N201</accession>
<accession>A6NJ44</accession>
<accession>Q6NT70</accession>
<accession>Q6UX74</accession>
<accession>Q8WV40</accession>
<accession>Q96D36</accession>
<accession>Q9NTD1</accession>
<accession>Q9P2A8</accession>
<accession>Q9Y3W8</accession>
<protein>
    <recommendedName>
        <fullName evidence="21">Integrator complex subunit 1</fullName>
        <shortName>Int1</shortName>
    </recommendedName>
</protein>
<name>INT1_HUMAN</name>
<organism>
    <name type="scientific">Homo sapiens</name>
    <name type="common">Human</name>
    <dbReference type="NCBI Taxonomy" id="9606"/>
    <lineage>
        <taxon>Eukaryota</taxon>
        <taxon>Metazoa</taxon>
        <taxon>Chordata</taxon>
        <taxon>Craniata</taxon>
        <taxon>Vertebrata</taxon>
        <taxon>Euteleostomi</taxon>
        <taxon>Mammalia</taxon>
        <taxon>Eutheria</taxon>
        <taxon>Euarchontoglires</taxon>
        <taxon>Primates</taxon>
        <taxon>Haplorrhini</taxon>
        <taxon>Catarrhini</taxon>
        <taxon>Hominidae</taxon>
        <taxon>Homo</taxon>
    </lineage>
</organism>
<feature type="chain" id="PRO_0000236044" description="Integrator complex subunit 1">
    <location>
        <begin position="1"/>
        <end position="2190"/>
    </location>
</feature>
<feature type="transmembrane region" description="Helical" evidence="2">
    <location>
        <begin position="1159"/>
        <end position="1179"/>
    </location>
</feature>
<feature type="region of interest" description="Disordered" evidence="3">
    <location>
        <begin position="1"/>
        <end position="61"/>
    </location>
</feature>
<feature type="region of interest" description="Disordered" evidence="3">
    <location>
        <begin position="922"/>
        <end position="945"/>
    </location>
</feature>
<feature type="region of interest" description="Disordered" evidence="3">
    <location>
        <begin position="1311"/>
        <end position="1334"/>
    </location>
</feature>
<feature type="compositionally biased region" description="Polar residues" evidence="3">
    <location>
        <begin position="34"/>
        <end position="44"/>
    </location>
</feature>
<feature type="compositionally biased region" description="Acidic residues" evidence="3">
    <location>
        <begin position="923"/>
        <end position="932"/>
    </location>
</feature>
<feature type="compositionally biased region" description="Basic and acidic residues" evidence="3">
    <location>
        <begin position="1314"/>
        <end position="1323"/>
    </location>
</feature>
<feature type="modified residue" description="Phosphoserine" evidence="32">
    <location>
        <position position="13"/>
    </location>
</feature>
<feature type="modified residue" description="N6-acetyllysine" evidence="29">
    <location>
        <position position="47"/>
    </location>
</feature>
<feature type="modified residue" description="Phosphothreonine" evidence="32">
    <location>
        <position position="83"/>
    </location>
</feature>
<feature type="modified residue" description="Phosphoserine" evidence="33">
    <location>
        <position position="87"/>
    </location>
</feature>
<feature type="modified residue" description="Phosphoserine" evidence="31 32 33">
    <location>
        <position position="307"/>
    </location>
</feature>
<feature type="modified residue" description="Phosphoserine" evidence="33">
    <location>
        <position position="924"/>
    </location>
</feature>
<feature type="modified residue" description="Phosphoserine" evidence="30">
    <location>
        <position position="1318"/>
    </location>
</feature>
<feature type="modified residue" description="Phosphoserine" evidence="1">
    <location>
        <position position="1326"/>
    </location>
</feature>
<feature type="modified residue" description="Phosphoserine" evidence="1">
    <location>
        <position position="1327"/>
    </location>
</feature>
<feature type="modified residue" description="Phosphoserine" evidence="32">
    <location>
        <position position="1395"/>
    </location>
</feature>
<feature type="sequence variant" id="VAR_083352" description="In NDCAGF; uncertain significance; dbSNP:rs200649090." evidence="10">
    <original>R</original>
    <variation>C</variation>
    <location>
        <position position="77"/>
    </location>
</feature>
<feature type="sequence variant" id="VAR_049627" description="In dbSNP:rs1783095542.">
    <original>P</original>
    <variation>L</variation>
    <location>
        <position position="172"/>
    </location>
</feature>
<feature type="sequence variant" id="VAR_083353" description="In NDCAGF; dbSNP:rs1030646527." evidence="12">
    <original>M</original>
    <variation>V</variation>
    <location>
        <position position="549"/>
    </location>
</feature>
<feature type="sequence variant" id="VAR_083354" description="In NDCAGF; decreased protein abundance." evidence="8">
    <location>
        <begin position="1784"/>
        <end position="2190"/>
    </location>
</feature>
<feature type="sequence variant" id="VAR_083355" description="In NDCAGF; uncertain significance; dbSNP:rs1162809128." evidence="10">
    <original>P</original>
    <variation>L</variation>
    <location>
        <position position="1874"/>
    </location>
</feature>
<feature type="sequence variant" id="VAR_083356" description="In NDCAGF." evidence="12">
    <location>
        <begin position="1961"/>
        <end position="2190"/>
    </location>
</feature>
<feature type="sequence variant" id="VAR_083357" description="In NDCAGF; uncertain significance; dbSNP:rs1302980015." evidence="10">
    <original>L</original>
    <variation>P</variation>
    <location>
        <position position="2164"/>
    </location>
</feature>
<feature type="sequence conflict" description="In Ref. 2; BAA92678." evidence="21" ref="2">
    <original>A</original>
    <variation>G</variation>
    <location>
        <position position="1862"/>
    </location>
</feature>
<feature type="sequence conflict" description="In Ref. 5; CAB70710." evidence="21" ref="5">
    <original>G</original>
    <variation>V</variation>
    <location>
        <position position="2004"/>
    </location>
</feature>
<feature type="sequence conflict" description="In Ref. 5; CAB70710." evidence="21" ref="5">
    <original>S</original>
    <variation>C</variation>
    <location>
        <position position="2105"/>
    </location>
</feature>
<feature type="sequence conflict" description="In Ref. 5; CAB70710." evidence="21" ref="5">
    <original>A</original>
    <variation>AF</variation>
    <location>
        <position position="2162"/>
    </location>
</feature>
<feature type="turn" evidence="35">
    <location>
        <begin position="119"/>
        <end position="121"/>
    </location>
</feature>
<feature type="helix" evidence="35">
    <location>
        <begin position="122"/>
        <end position="131"/>
    </location>
</feature>
<feature type="helix" evidence="35">
    <location>
        <begin position="137"/>
        <end position="151"/>
    </location>
</feature>
<feature type="turn" evidence="35">
    <location>
        <begin position="152"/>
        <end position="154"/>
    </location>
</feature>
<feature type="helix" evidence="35">
    <location>
        <begin position="159"/>
        <end position="168"/>
    </location>
</feature>
<feature type="helix" evidence="35">
    <location>
        <begin position="172"/>
        <end position="176"/>
    </location>
</feature>
<feature type="helix" evidence="35">
    <location>
        <begin position="178"/>
        <end position="187"/>
    </location>
</feature>
<feature type="strand" evidence="35">
    <location>
        <begin position="192"/>
        <end position="194"/>
    </location>
</feature>
<feature type="helix" evidence="35">
    <location>
        <begin position="203"/>
        <end position="212"/>
    </location>
</feature>
<feature type="helix" evidence="35">
    <location>
        <begin position="213"/>
        <end position="216"/>
    </location>
</feature>
<feature type="helix" evidence="35">
    <location>
        <begin position="224"/>
        <end position="233"/>
    </location>
</feature>
<feature type="strand" evidence="35">
    <location>
        <begin position="239"/>
        <end position="242"/>
    </location>
</feature>
<feature type="helix" evidence="35">
    <location>
        <begin position="247"/>
        <end position="256"/>
    </location>
</feature>
<feature type="helix" evidence="35">
    <location>
        <begin position="322"/>
        <end position="337"/>
    </location>
</feature>
<feature type="helix" evidence="35">
    <location>
        <begin position="350"/>
        <end position="356"/>
    </location>
</feature>
<feature type="helix" evidence="35">
    <location>
        <begin position="361"/>
        <end position="369"/>
    </location>
</feature>
<feature type="turn" evidence="35">
    <location>
        <begin position="370"/>
        <end position="375"/>
    </location>
</feature>
<feature type="helix" evidence="35">
    <location>
        <begin position="378"/>
        <end position="380"/>
    </location>
</feature>
<feature type="helix" evidence="35">
    <location>
        <begin position="381"/>
        <end position="394"/>
    </location>
</feature>
<feature type="helix" evidence="35">
    <location>
        <begin position="400"/>
        <end position="410"/>
    </location>
</feature>
<feature type="helix" evidence="35">
    <location>
        <begin position="417"/>
        <end position="433"/>
    </location>
</feature>
<feature type="helix" evidence="35">
    <location>
        <begin position="437"/>
        <end position="450"/>
    </location>
</feature>
<feature type="helix" evidence="35">
    <location>
        <begin position="456"/>
        <end position="468"/>
    </location>
</feature>
<feature type="helix" evidence="35">
    <location>
        <begin position="473"/>
        <end position="484"/>
    </location>
</feature>
<feature type="strand" evidence="35">
    <location>
        <begin position="487"/>
        <end position="489"/>
    </location>
</feature>
<feature type="helix" evidence="35">
    <location>
        <begin position="492"/>
        <end position="505"/>
    </location>
</feature>
<feature type="helix" evidence="35">
    <location>
        <begin position="514"/>
        <end position="520"/>
    </location>
</feature>
<feature type="helix" evidence="35">
    <location>
        <begin position="526"/>
        <end position="529"/>
    </location>
</feature>
<feature type="helix" evidence="35">
    <location>
        <begin position="535"/>
        <end position="549"/>
    </location>
</feature>
<feature type="helix" evidence="35">
    <location>
        <begin position="550"/>
        <end position="552"/>
    </location>
</feature>
<feature type="helix" evidence="35">
    <location>
        <begin position="555"/>
        <end position="563"/>
    </location>
</feature>
<feature type="turn" evidence="35">
    <location>
        <begin position="564"/>
        <end position="567"/>
    </location>
</feature>
<feature type="helix" evidence="35">
    <location>
        <begin position="573"/>
        <end position="584"/>
    </location>
</feature>
<feature type="helix" evidence="35">
    <location>
        <begin position="589"/>
        <end position="594"/>
    </location>
</feature>
<feature type="helix" evidence="35">
    <location>
        <begin position="597"/>
        <end position="600"/>
    </location>
</feature>
<feature type="helix" evidence="35">
    <location>
        <begin position="605"/>
        <end position="614"/>
    </location>
</feature>
<feature type="helix" evidence="35">
    <location>
        <begin position="621"/>
        <end position="625"/>
    </location>
</feature>
<feature type="strand" evidence="35">
    <location>
        <begin position="626"/>
        <end position="628"/>
    </location>
</feature>
<feature type="helix" evidence="35">
    <location>
        <begin position="636"/>
        <end position="644"/>
    </location>
</feature>
<feature type="helix" evidence="35">
    <location>
        <begin position="651"/>
        <end position="661"/>
    </location>
</feature>
<feature type="helix" evidence="35">
    <location>
        <begin position="669"/>
        <end position="683"/>
    </location>
</feature>
<feature type="turn" evidence="35">
    <location>
        <begin position="684"/>
        <end position="686"/>
    </location>
</feature>
<feature type="helix" evidence="35">
    <location>
        <begin position="701"/>
        <end position="709"/>
    </location>
</feature>
<feature type="helix" evidence="35">
    <location>
        <begin position="731"/>
        <end position="747"/>
    </location>
</feature>
<feature type="turn" evidence="35">
    <location>
        <begin position="749"/>
        <end position="751"/>
    </location>
</feature>
<feature type="helix" evidence="35">
    <location>
        <begin position="752"/>
        <end position="759"/>
    </location>
</feature>
<feature type="helix" evidence="35">
    <location>
        <begin position="761"/>
        <end position="771"/>
    </location>
</feature>
<feature type="turn" evidence="35">
    <location>
        <begin position="785"/>
        <end position="788"/>
    </location>
</feature>
<feature type="helix" evidence="35">
    <location>
        <begin position="789"/>
        <end position="818"/>
    </location>
</feature>
<feature type="helix" evidence="35">
    <location>
        <begin position="828"/>
        <end position="830"/>
    </location>
</feature>
<feature type="helix" evidence="35">
    <location>
        <begin position="847"/>
        <end position="860"/>
    </location>
</feature>
<feature type="turn" evidence="35">
    <location>
        <begin position="861"/>
        <end position="863"/>
    </location>
</feature>
<feature type="helix" evidence="35">
    <location>
        <begin position="947"/>
        <end position="958"/>
    </location>
</feature>
<feature type="helix" evidence="35">
    <location>
        <begin position="965"/>
        <end position="976"/>
    </location>
</feature>
<feature type="turn" evidence="35">
    <location>
        <begin position="977"/>
        <end position="980"/>
    </location>
</feature>
<feature type="helix" evidence="35">
    <location>
        <begin position="984"/>
        <end position="998"/>
    </location>
</feature>
<feature type="helix" evidence="35">
    <location>
        <begin position="1024"/>
        <end position="1026"/>
    </location>
</feature>
<feature type="helix" evidence="35">
    <location>
        <begin position="1027"/>
        <end position="1031"/>
    </location>
</feature>
<feature type="helix" evidence="35">
    <location>
        <begin position="1033"/>
        <end position="1035"/>
    </location>
</feature>
<feature type="helix" evidence="35">
    <location>
        <begin position="1039"/>
        <end position="1054"/>
    </location>
</feature>
<feature type="helix" evidence="35">
    <location>
        <begin position="1060"/>
        <end position="1072"/>
    </location>
</feature>
<feature type="helix" evidence="35">
    <location>
        <begin position="1079"/>
        <end position="1095"/>
    </location>
</feature>
<feature type="helix" evidence="35">
    <location>
        <begin position="1097"/>
        <end position="1103"/>
    </location>
</feature>
<feature type="helix" evidence="35">
    <location>
        <begin position="1111"/>
        <end position="1133"/>
    </location>
</feature>
<feature type="strand" evidence="35">
    <location>
        <begin position="1150"/>
        <end position="1153"/>
    </location>
</feature>
<feature type="strand" evidence="35">
    <location>
        <begin position="1159"/>
        <end position="1162"/>
    </location>
</feature>
<feature type="helix" evidence="35">
    <location>
        <begin position="1164"/>
        <end position="1175"/>
    </location>
</feature>
<feature type="helix" evidence="35">
    <location>
        <begin position="1184"/>
        <end position="1193"/>
    </location>
</feature>
<feature type="strand" evidence="35">
    <location>
        <begin position="1203"/>
        <end position="1208"/>
    </location>
</feature>
<feature type="helix" evidence="35">
    <location>
        <begin position="1217"/>
        <end position="1224"/>
    </location>
</feature>
<feature type="strand" evidence="35">
    <location>
        <begin position="1225"/>
        <end position="1227"/>
    </location>
</feature>
<feature type="helix" evidence="35">
    <location>
        <begin position="1229"/>
        <end position="1235"/>
    </location>
</feature>
<feature type="helix" evidence="35">
    <location>
        <begin position="1241"/>
        <end position="1249"/>
    </location>
</feature>
<feature type="helix" evidence="35">
    <location>
        <begin position="1255"/>
        <end position="1271"/>
    </location>
</feature>
<feature type="helix" evidence="35">
    <location>
        <begin position="1273"/>
        <end position="1275"/>
    </location>
</feature>
<feature type="turn" evidence="35">
    <location>
        <begin position="1276"/>
        <end position="1279"/>
    </location>
</feature>
<feature type="helix" evidence="35">
    <location>
        <begin position="1284"/>
        <end position="1296"/>
    </location>
</feature>
<feature type="helix" evidence="35">
    <location>
        <begin position="1302"/>
        <end position="1311"/>
    </location>
</feature>
<feature type="helix" evidence="35">
    <location>
        <begin position="1352"/>
        <end position="1359"/>
    </location>
</feature>
<feature type="helix" evidence="35">
    <location>
        <begin position="1375"/>
        <end position="1393"/>
    </location>
</feature>
<feature type="helix" evidence="35">
    <location>
        <begin position="1402"/>
        <end position="1414"/>
    </location>
</feature>
<feature type="helix" evidence="35">
    <location>
        <begin position="1421"/>
        <end position="1427"/>
    </location>
</feature>
<feature type="helix" evidence="35">
    <location>
        <begin position="1429"/>
        <end position="1445"/>
    </location>
</feature>
<feature type="helix" evidence="35">
    <location>
        <begin position="1452"/>
        <end position="1467"/>
    </location>
</feature>
<feature type="helix" evidence="35">
    <location>
        <begin position="1470"/>
        <end position="1472"/>
    </location>
</feature>
<feature type="helix" evidence="35">
    <location>
        <begin position="1476"/>
        <end position="1489"/>
    </location>
</feature>
<feature type="helix" evidence="35">
    <location>
        <begin position="1497"/>
        <end position="1510"/>
    </location>
</feature>
<feature type="helix" evidence="35">
    <location>
        <begin position="1514"/>
        <end position="1530"/>
    </location>
</feature>
<feature type="helix" evidence="35">
    <location>
        <begin position="1538"/>
        <end position="1551"/>
    </location>
</feature>
<feature type="helix" evidence="35">
    <location>
        <begin position="1556"/>
        <end position="1565"/>
    </location>
</feature>
<feature type="helix" evidence="34">
    <location>
        <begin position="1568"/>
        <end position="1571"/>
    </location>
</feature>
<feature type="helix" evidence="34">
    <location>
        <begin position="1573"/>
        <end position="1577"/>
    </location>
</feature>
<feature type="helix" evidence="35">
    <location>
        <begin position="1579"/>
        <end position="1588"/>
    </location>
</feature>
<feature type="helix" evidence="34">
    <location>
        <begin position="1598"/>
        <end position="1608"/>
    </location>
</feature>
<feature type="helix" evidence="35">
    <location>
        <begin position="1615"/>
        <end position="1625"/>
    </location>
</feature>
<feature type="strand" evidence="35">
    <location>
        <begin position="1629"/>
        <end position="1633"/>
    </location>
</feature>
<feature type="helix" evidence="35">
    <location>
        <begin position="1634"/>
        <end position="1641"/>
    </location>
</feature>
<feature type="helix" evidence="35">
    <location>
        <begin position="1657"/>
        <end position="1667"/>
    </location>
</feature>
<feature type="helix" evidence="35">
    <location>
        <begin position="1670"/>
        <end position="1680"/>
    </location>
</feature>
<feature type="strand" evidence="34">
    <location>
        <begin position="1681"/>
        <end position="1683"/>
    </location>
</feature>
<feature type="helix" evidence="35">
    <location>
        <begin position="1691"/>
        <end position="1702"/>
    </location>
</feature>
<feature type="turn" evidence="35">
    <location>
        <begin position="1705"/>
        <end position="1707"/>
    </location>
</feature>
<feature type="strand" evidence="34">
    <location>
        <begin position="1708"/>
        <end position="1711"/>
    </location>
</feature>
<feature type="helix" evidence="35">
    <location>
        <begin position="1729"/>
        <end position="1746"/>
    </location>
</feature>
<feature type="helix" evidence="35">
    <location>
        <begin position="1756"/>
        <end position="1769"/>
    </location>
</feature>
<feature type="helix" evidence="35">
    <location>
        <begin position="1773"/>
        <end position="1790"/>
    </location>
</feature>
<feature type="helix" evidence="35">
    <location>
        <begin position="1794"/>
        <end position="1809"/>
    </location>
</feature>
<feature type="helix" evidence="35">
    <location>
        <begin position="1819"/>
        <end position="1822"/>
    </location>
</feature>
<feature type="strand" evidence="35">
    <location>
        <begin position="1828"/>
        <end position="1830"/>
    </location>
</feature>
<feature type="helix" evidence="35">
    <location>
        <begin position="1836"/>
        <end position="1847"/>
    </location>
</feature>
<feature type="helix" evidence="35">
    <location>
        <begin position="1853"/>
        <end position="1855"/>
    </location>
</feature>
<feature type="helix" evidence="35">
    <location>
        <begin position="1856"/>
        <end position="1872"/>
    </location>
</feature>
<feature type="helix" evidence="35">
    <location>
        <begin position="1874"/>
        <end position="1878"/>
    </location>
</feature>
<feature type="helix" evidence="35">
    <location>
        <begin position="1881"/>
        <end position="1887"/>
    </location>
</feature>
<feature type="helix" evidence="35">
    <location>
        <begin position="1888"/>
        <end position="1890"/>
    </location>
</feature>
<feature type="turn" evidence="35">
    <location>
        <begin position="1891"/>
        <end position="1893"/>
    </location>
</feature>
<feature type="helix" evidence="35">
    <location>
        <begin position="1896"/>
        <end position="1901"/>
    </location>
</feature>
<feature type="turn" evidence="35">
    <location>
        <begin position="1902"/>
        <end position="1904"/>
    </location>
</feature>
<feature type="helix" evidence="35">
    <location>
        <begin position="1905"/>
        <end position="1918"/>
    </location>
</feature>
<feature type="helix" evidence="35">
    <location>
        <begin position="1921"/>
        <end position="1923"/>
    </location>
</feature>
<feature type="helix" evidence="35">
    <location>
        <begin position="1929"/>
        <end position="1944"/>
    </location>
</feature>
<feature type="strand" evidence="34">
    <location>
        <begin position="1946"/>
        <end position="1949"/>
    </location>
</feature>
<feature type="helix" evidence="35">
    <location>
        <begin position="1950"/>
        <end position="1952"/>
    </location>
</feature>
<feature type="helix" evidence="35">
    <location>
        <begin position="1953"/>
        <end position="1969"/>
    </location>
</feature>
<feature type="helix" evidence="35">
    <location>
        <begin position="1971"/>
        <end position="1980"/>
    </location>
</feature>
<feature type="helix" evidence="35">
    <location>
        <begin position="1982"/>
        <end position="1991"/>
    </location>
</feature>
<feature type="helix" evidence="35">
    <location>
        <begin position="1996"/>
        <end position="2002"/>
    </location>
</feature>
<feature type="helix" evidence="35">
    <location>
        <begin position="2003"/>
        <end position="2006"/>
    </location>
</feature>
<feature type="turn" evidence="35">
    <location>
        <begin position="2045"/>
        <end position="2047"/>
    </location>
</feature>
<feature type="helix" evidence="35">
    <location>
        <begin position="2048"/>
        <end position="2056"/>
    </location>
</feature>
<feature type="helix" evidence="35">
    <location>
        <begin position="2060"/>
        <end position="2076"/>
    </location>
</feature>
<feature type="helix" evidence="35">
    <location>
        <begin position="2078"/>
        <end position="2083"/>
    </location>
</feature>
<feature type="helix" evidence="35">
    <location>
        <begin position="2085"/>
        <end position="2091"/>
    </location>
</feature>
<feature type="helix" evidence="35">
    <location>
        <begin position="2097"/>
        <end position="2113"/>
    </location>
</feature>
<feature type="helix" evidence="35">
    <location>
        <begin position="2115"/>
        <end position="2117"/>
    </location>
</feature>
<feature type="helix" evidence="35">
    <location>
        <begin position="2119"/>
        <end position="2121"/>
    </location>
</feature>
<feature type="helix" evidence="35">
    <location>
        <begin position="2122"/>
        <end position="2129"/>
    </location>
</feature>
<feature type="helix" evidence="35">
    <location>
        <begin position="2134"/>
        <end position="2142"/>
    </location>
</feature>
<feature type="helix" evidence="35">
    <location>
        <begin position="2144"/>
        <end position="2151"/>
    </location>
</feature>
<feature type="strand" evidence="34">
    <location>
        <begin position="2152"/>
        <end position="2154"/>
    </location>
</feature>
<feature type="helix" evidence="35">
    <location>
        <begin position="2155"/>
        <end position="2168"/>
    </location>
</feature>
<feature type="helix" evidence="35">
    <location>
        <begin position="2174"/>
        <end position="2188"/>
    </location>
</feature>
<keyword id="KW-0002">3D-structure</keyword>
<keyword id="KW-0007">Acetylation</keyword>
<keyword id="KW-0225">Disease variant</keyword>
<keyword id="KW-0991">Intellectual disability</keyword>
<keyword id="KW-0472">Membrane</keyword>
<keyword id="KW-0539">Nucleus</keyword>
<keyword id="KW-0597">Phosphoprotein</keyword>
<keyword id="KW-1267">Proteomics identification</keyword>
<keyword id="KW-1185">Reference proteome</keyword>
<keyword id="KW-0812">Transmembrane</keyword>
<keyword id="KW-1133">Transmembrane helix</keyword>
<reference key="1">
    <citation type="journal article" date="2006" name="Nature">
        <title>DNA sequence and analysis of human chromosome 8.</title>
        <authorList>
            <person name="Nusbaum C."/>
            <person name="Mikkelsen T.S."/>
            <person name="Zody M.C."/>
            <person name="Asakawa S."/>
            <person name="Taudien S."/>
            <person name="Garber M."/>
            <person name="Kodira C.D."/>
            <person name="Schueler M.G."/>
            <person name="Shimizu A."/>
            <person name="Whittaker C.A."/>
            <person name="Chang J.L."/>
            <person name="Cuomo C.A."/>
            <person name="Dewar K."/>
            <person name="FitzGerald M.G."/>
            <person name="Yang X."/>
            <person name="Allen N.R."/>
            <person name="Anderson S."/>
            <person name="Asakawa T."/>
            <person name="Blechschmidt K."/>
            <person name="Bloom T."/>
            <person name="Borowsky M.L."/>
            <person name="Butler J."/>
            <person name="Cook A."/>
            <person name="Corum B."/>
            <person name="DeArellano K."/>
            <person name="DeCaprio D."/>
            <person name="Dooley K.T."/>
            <person name="Dorris L. III"/>
            <person name="Engels R."/>
            <person name="Gloeckner G."/>
            <person name="Hafez N."/>
            <person name="Hagopian D.S."/>
            <person name="Hall J.L."/>
            <person name="Ishikawa S.K."/>
            <person name="Jaffe D.B."/>
            <person name="Kamat A."/>
            <person name="Kudoh J."/>
            <person name="Lehmann R."/>
            <person name="Lokitsang T."/>
            <person name="Macdonald P."/>
            <person name="Major J.E."/>
            <person name="Matthews C.D."/>
            <person name="Mauceli E."/>
            <person name="Menzel U."/>
            <person name="Mihalev A.H."/>
            <person name="Minoshima S."/>
            <person name="Murayama Y."/>
            <person name="Naylor J.W."/>
            <person name="Nicol R."/>
            <person name="Nguyen C."/>
            <person name="O'Leary S.B."/>
            <person name="O'Neill K."/>
            <person name="Parker S.C.J."/>
            <person name="Polley A."/>
            <person name="Raymond C.K."/>
            <person name="Reichwald K."/>
            <person name="Rodriguez J."/>
            <person name="Sasaki T."/>
            <person name="Schilhabel M."/>
            <person name="Siddiqui R."/>
            <person name="Smith C.L."/>
            <person name="Sneddon T.P."/>
            <person name="Talamas J.A."/>
            <person name="Tenzin P."/>
            <person name="Topham K."/>
            <person name="Venkataraman V."/>
            <person name="Wen G."/>
            <person name="Yamazaki S."/>
            <person name="Young S.K."/>
            <person name="Zeng Q."/>
            <person name="Zimmer A.R."/>
            <person name="Rosenthal A."/>
            <person name="Birren B.W."/>
            <person name="Platzer M."/>
            <person name="Shimizu N."/>
            <person name="Lander E.S."/>
        </authorList>
    </citation>
    <scope>NUCLEOTIDE SEQUENCE [LARGE SCALE GENOMIC DNA]</scope>
</reference>
<reference key="2">
    <citation type="journal article" date="2000" name="DNA Res.">
        <title>Prediction of the coding sequences of unidentified human genes. XVI. The complete sequences of 150 new cDNA clones from brain which code for large proteins in vitro.</title>
        <authorList>
            <person name="Nagase T."/>
            <person name="Kikuno R."/>
            <person name="Ishikawa K."/>
            <person name="Hirosawa M."/>
            <person name="Ohara O."/>
        </authorList>
    </citation>
    <scope>NUCLEOTIDE SEQUENCE [LARGE SCALE MRNA] OF 814-2190</scope>
    <source>
        <tissue>Brain</tissue>
    </source>
</reference>
<reference key="3">
    <citation type="journal article" date="2003" name="Genome Res.">
        <title>The secreted protein discovery initiative (SPDI), a large-scale effort to identify novel human secreted and transmembrane proteins: a bioinformatics assessment.</title>
        <authorList>
            <person name="Clark H.F."/>
            <person name="Gurney A.L."/>
            <person name="Abaya E."/>
            <person name="Baker K."/>
            <person name="Baldwin D.T."/>
            <person name="Brush J."/>
            <person name="Chen J."/>
            <person name="Chow B."/>
            <person name="Chui C."/>
            <person name="Crowley C."/>
            <person name="Currell B."/>
            <person name="Deuel B."/>
            <person name="Dowd P."/>
            <person name="Eaton D."/>
            <person name="Foster J.S."/>
            <person name="Grimaldi C."/>
            <person name="Gu Q."/>
            <person name="Hass P.E."/>
            <person name="Heldens S."/>
            <person name="Huang A."/>
            <person name="Kim H.S."/>
            <person name="Klimowski L."/>
            <person name="Jin Y."/>
            <person name="Johnson S."/>
            <person name="Lee J."/>
            <person name="Lewis L."/>
            <person name="Liao D."/>
            <person name="Mark M.R."/>
            <person name="Robbie E."/>
            <person name="Sanchez C."/>
            <person name="Schoenfeld J."/>
            <person name="Seshagiri S."/>
            <person name="Simmons L."/>
            <person name="Singh J."/>
            <person name="Smith V."/>
            <person name="Stinson J."/>
            <person name="Vagts A."/>
            <person name="Vandlen R.L."/>
            <person name="Watanabe C."/>
            <person name="Wieand D."/>
            <person name="Woods K."/>
            <person name="Xie M.-H."/>
            <person name="Yansura D.G."/>
            <person name="Yi S."/>
            <person name="Yu G."/>
            <person name="Yuan J."/>
            <person name="Zhang M."/>
            <person name="Zhang Z."/>
            <person name="Goddard A.D."/>
            <person name="Wood W.I."/>
            <person name="Godowski P.J."/>
            <person name="Gray A.M."/>
        </authorList>
    </citation>
    <scope>NUCLEOTIDE SEQUENCE [LARGE SCALE MRNA] OF 1147-2190</scope>
</reference>
<reference key="4">
    <citation type="journal article" date="2004" name="Genome Res.">
        <title>The status, quality, and expansion of the NIH full-length cDNA project: the Mammalian Gene Collection (MGC).</title>
        <authorList>
            <consortium name="The MGC Project Team"/>
        </authorList>
    </citation>
    <scope>NUCLEOTIDE SEQUENCE [LARGE SCALE MRNA] OF 1291-2190</scope>
    <source>
        <tissue>Brain</tissue>
        <tissue>Lymph</tissue>
        <tissue>Skin</tissue>
    </source>
</reference>
<reference key="5">
    <citation type="journal article" date="2007" name="BMC Genomics">
        <title>The full-ORF clone resource of the German cDNA consortium.</title>
        <authorList>
            <person name="Bechtel S."/>
            <person name="Rosenfelder H."/>
            <person name="Duda A."/>
            <person name="Schmidt C.P."/>
            <person name="Ernst U."/>
            <person name="Wellenreuther R."/>
            <person name="Mehrle A."/>
            <person name="Schuster C."/>
            <person name="Bahr A."/>
            <person name="Bloecker H."/>
            <person name="Heubner D."/>
            <person name="Hoerlein A."/>
            <person name="Michel G."/>
            <person name="Wedler H."/>
            <person name="Koehrer K."/>
            <person name="Ottenwaelder B."/>
            <person name="Poustka A."/>
            <person name="Wiemann S."/>
            <person name="Schupp I."/>
        </authorList>
    </citation>
    <scope>NUCLEOTIDE SEQUENCE [LARGE SCALE MRNA] OF 1558-2190</scope>
    <source>
        <tissue>Testis</tissue>
        <tissue>Uterus</tissue>
    </source>
</reference>
<reference key="6">
    <citation type="journal article" date="2005" name="Cell">
        <title>Integrator, a multiprotein mediator of small nuclear RNA processing, associates with the C-terminal repeat of RNA polymerase II.</title>
        <authorList>
            <person name="Baillat D."/>
            <person name="Hakimi M.-A."/>
            <person name="Naeaer A.M."/>
            <person name="Shilatifard A."/>
            <person name="Cooch N."/>
            <person name="Shiekhattar R."/>
        </authorList>
    </citation>
    <scope>FUNCTION</scope>
    <scope>IDENTIFICATION BY MASS SPECTROMETRY</scope>
    <scope>IDENTIFICATION IN THE INTEGRATOR COMPLEX</scope>
    <scope>SUBCELLULAR LOCATION</scope>
    <source>
        <tissue>Cervix carcinoma</tissue>
    </source>
</reference>
<reference key="7">
    <citation type="journal article" date="2006" name="Cell">
        <title>Global, in vivo, and site-specific phosphorylation dynamics in signaling networks.</title>
        <authorList>
            <person name="Olsen J.V."/>
            <person name="Blagoev B."/>
            <person name="Gnad F."/>
            <person name="Macek B."/>
            <person name="Kumar C."/>
            <person name="Mortensen P."/>
            <person name="Mann M."/>
        </authorList>
    </citation>
    <scope>IDENTIFICATION BY MASS SPECTROMETRY [LARGE SCALE ANALYSIS]</scope>
    <source>
        <tissue>Cervix carcinoma</tissue>
    </source>
</reference>
<reference key="8">
    <citation type="journal article" date="2006" name="Nat. Biotechnol.">
        <title>A probability-based approach for high-throughput protein phosphorylation analysis and site localization.</title>
        <authorList>
            <person name="Beausoleil S.A."/>
            <person name="Villen J."/>
            <person name="Gerber S.A."/>
            <person name="Rush J."/>
            <person name="Gygi S.P."/>
        </authorList>
    </citation>
    <scope>IDENTIFICATION BY MASS SPECTROMETRY [LARGE SCALE ANALYSIS]</scope>
    <source>
        <tissue>Cervix carcinoma</tissue>
    </source>
</reference>
<reference key="9">
    <citation type="journal article" date="2008" name="Mol. Cell">
        <title>Kinase-selective enrichment enables quantitative phosphoproteomics of the kinome across the cell cycle.</title>
        <authorList>
            <person name="Daub H."/>
            <person name="Olsen J.V."/>
            <person name="Bairlein M."/>
            <person name="Gnad F."/>
            <person name="Oppermann F.S."/>
            <person name="Korner R."/>
            <person name="Greff Z."/>
            <person name="Keri G."/>
            <person name="Stemmann O."/>
            <person name="Mann M."/>
        </authorList>
    </citation>
    <scope>IDENTIFICATION BY MASS SPECTROMETRY [LARGE SCALE ANALYSIS]</scope>
    <source>
        <tissue>Cervix carcinoma</tissue>
    </source>
</reference>
<reference key="10">
    <citation type="journal article" date="2008" name="Proc. Natl. Acad. Sci. U.S.A.">
        <title>A quantitative atlas of mitotic phosphorylation.</title>
        <authorList>
            <person name="Dephoure N."/>
            <person name="Zhou C."/>
            <person name="Villen J."/>
            <person name="Beausoleil S.A."/>
            <person name="Bakalarski C.E."/>
            <person name="Elledge S.J."/>
            <person name="Gygi S.P."/>
        </authorList>
    </citation>
    <scope>IDENTIFICATION BY MASS SPECTROMETRY [LARGE SCALE ANALYSIS]</scope>
    <source>
        <tissue>Cervix carcinoma</tissue>
    </source>
</reference>
<reference key="11">
    <citation type="journal article" date="2009" name="Mol. Cell. Proteomics">
        <title>Large-scale proteomics analysis of the human kinome.</title>
        <authorList>
            <person name="Oppermann F.S."/>
            <person name="Gnad F."/>
            <person name="Olsen J.V."/>
            <person name="Hornberger R."/>
            <person name="Greff Z."/>
            <person name="Keri G."/>
            <person name="Mann M."/>
            <person name="Daub H."/>
        </authorList>
    </citation>
    <scope>IDENTIFICATION BY MASS SPECTROMETRY [LARGE SCALE ANALYSIS]</scope>
</reference>
<reference key="12">
    <citation type="journal article" date="2009" name="Sci. Signal.">
        <title>Quantitative phosphoproteomic analysis of T cell receptor signaling reveals system-wide modulation of protein-protein interactions.</title>
        <authorList>
            <person name="Mayya V."/>
            <person name="Lundgren D.H."/>
            <person name="Hwang S.-I."/>
            <person name="Rezaul K."/>
            <person name="Wu L."/>
            <person name="Eng J.K."/>
            <person name="Rodionov V."/>
            <person name="Han D.K."/>
        </authorList>
    </citation>
    <scope>IDENTIFICATION BY MASS SPECTROMETRY [LARGE SCALE ANALYSIS]</scope>
    <source>
        <tissue>Leukemic T-cell</tissue>
    </source>
</reference>
<reference key="13">
    <citation type="journal article" date="2009" name="Science">
        <title>Lysine acetylation targets protein complexes and co-regulates major cellular functions.</title>
        <authorList>
            <person name="Choudhary C."/>
            <person name="Kumar C."/>
            <person name="Gnad F."/>
            <person name="Nielsen M.L."/>
            <person name="Rehman M."/>
            <person name="Walther T.C."/>
            <person name="Olsen J.V."/>
            <person name="Mann M."/>
        </authorList>
    </citation>
    <scope>ACETYLATION [LARGE SCALE ANALYSIS] AT LYS-47</scope>
    <scope>IDENTIFICATION BY MASS SPECTROMETRY [LARGE SCALE ANALYSIS]</scope>
</reference>
<reference key="14">
    <citation type="journal article" date="2010" name="Sci. Signal.">
        <title>Quantitative phosphoproteomics reveals widespread full phosphorylation site occupancy during mitosis.</title>
        <authorList>
            <person name="Olsen J.V."/>
            <person name="Vermeulen M."/>
            <person name="Santamaria A."/>
            <person name="Kumar C."/>
            <person name="Miller M.L."/>
            <person name="Jensen L.J."/>
            <person name="Gnad F."/>
            <person name="Cox J."/>
            <person name="Jensen T.S."/>
            <person name="Nigg E.A."/>
            <person name="Brunak S."/>
            <person name="Mann M."/>
        </authorList>
    </citation>
    <scope>PHOSPHORYLATION [LARGE SCALE ANALYSIS] AT SER-1318</scope>
    <scope>IDENTIFICATION BY MASS SPECTROMETRY [LARGE SCALE ANALYSIS]</scope>
    <source>
        <tissue>Cervix carcinoma</tissue>
    </source>
</reference>
<reference key="15">
    <citation type="journal article" date="2011" name="BMC Syst. Biol.">
        <title>Initial characterization of the human central proteome.</title>
        <authorList>
            <person name="Burkard T.R."/>
            <person name="Planyavsky M."/>
            <person name="Kaupe I."/>
            <person name="Breitwieser F.P."/>
            <person name="Buerckstuemmer T."/>
            <person name="Bennett K.L."/>
            <person name="Superti-Furga G."/>
            <person name="Colinge J."/>
        </authorList>
    </citation>
    <scope>IDENTIFICATION BY MASS SPECTROMETRY [LARGE SCALE ANALYSIS]</scope>
</reference>
<reference key="16">
    <citation type="journal article" date="2011" name="Sci. Signal.">
        <title>System-wide temporal characterization of the proteome and phosphoproteome of human embryonic stem cell differentiation.</title>
        <authorList>
            <person name="Rigbolt K.T."/>
            <person name="Prokhorova T.A."/>
            <person name="Akimov V."/>
            <person name="Henningsen J."/>
            <person name="Johansen P.T."/>
            <person name="Kratchmarova I."/>
            <person name="Kassem M."/>
            <person name="Mann M."/>
            <person name="Olsen J.V."/>
            <person name="Blagoev B."/>
        </authorList>
    </citation>
    <scope>PHOSPHORYLATION [LARGE SCALE ANALYSIS] AT SER-307</scope>
    <scope>IDENTIFICATION BY MASS SPECTROMETRY [LARGE SCALE ANALYSIS]</scope>
</reference>
<reference key="17">
    <citation type="journal article" date="2013" name="J. Proteome Res.">
        <title>Toward a comprehensive characterization of a human cancer cell phosphoproteome.</title>
        <authorList>
            <person name="Zhou H."/>
            <person name="Di Palma S."/>
            <person name="Preisinger C."/>
            <person name="Peng M."/>
            <person name="Polat A.N."/>
            <person name="Heck A.J."/>
            <person name="Mohammed S."/>
        </authorList>
    </citation>
    <scope>PHOSPHORYLATION [LARGE SCALE ANALYSIS] AT SER-13; THR-83; SER-307 AND SER-1395</scope>
    <scope>IDENTIFICATION BY MASS SPECTROMETRY [LARGE SCALE ANALYSIS]</scope>
    <source>
        <tissue>Cervix carcinoma</tissue>
        <tissue>Erythroleukemia</tissue>
    </source>
</reference>
<reference key="18">
    <citation type="journal article" date="2013" name="Mol. Biol. Cell">
        <title>Nuclear-localized Asunder regulates cytoplasmic dynein localization via its role in the integrator complex.</title>
        <authorList>
            <person name="Jodoin J.N."/>
            <person name="Sitaram P."/>
            <person name="Albrecht T.R."/>
            <person name="May S.B."/>
            <person name="Shboul M."/>
            <person name="Lee E."/>
            <person name="Reversade B."/>
            <person name="Wagner E.J."/>
            <person name="Lee L.A."/>
        </authorList>
    </citation>
    <scope>FUNCTION</scope>
</reference>
<reference key="19">
    <citation type="journal article" date="2014" name="J. Proteomics">
        <title>An enzyme assisted RP-RPLC approach for in-depth analysis of human liver phosphoproteome.</title>
        <authorList>
            <person name="Bian Y."/>
            <person name="Song C."/>
            <person name="Cheng K."/>
            <person name="Dong M."/>
            <person name="Wang F."/>
            <person name="Huang J."/>
            <person name="Sun D."/>
            <person name="Wang L."/>
            <person name="Ye M."/>
            <person name="Zou H."/>
        </authorList>
    </citation>
    <scope>PHOSPHORYLATION [LARGE SCALE ANALYSIS] AT SER-87; SER-307 AND SER-924</scope>
    <scope>IDENTIFICATION BY MASS SPECTROMETRY [LARGE SCALE ANALYSIS]</scope>
    <source>
        <tissue>Liver</tissue>
    </source>
</reference>
<reference key="20">
    <citation type="journal article" date="2014" name="Mol. Cell">
        <title>Integrator regulates transcriptional initiation and pause release following activation.</title>
        <authorList>
            <person name="Gardini A."/>
            <person name="Baillat D."/>
            <person name="Cesaroni M."/>
            <person name="Hu D."/>
            <person name="Marinis J.M."/>
            <person name="Wagner E.J."/>
            <person name="Lazar M.A."/>
            <person name="Shilatifard A."/>
            <person name="Shiekhattar R."/>
        </authorList>
    </citation>
    <scope>FUNCTION</scope>
    <scope>IDENTIFICATION IN THE INTEGRATOR COMPLEX</scope>
</reference>
<reference key="21">
    <citation type="journal article" date="2015" name="Nature">
        <title>Integrator mediates the biogenesis of enhancer RNAs.</title>
        <authorList>
            <person name="Lai F."/>
            <person name="Gardini A."/>
            <person name="Zhang A."/>
            <person name="Shiekhattar R."/>
        </authorList>
    </citation>
    <scope>FUNCTION</scope>
</reference>
<reference key="22">
    <citation type="journal article" date="2019" name="Sci. Rep.">
        <title>Integrator is a key component of human telomerase RNA biogenesis.</title>
        <authorList>
            <person name="Rubtsova M.P."/>
            <person name="Vasilkova D.P."/>
            <person name="Moshareva M.A."/>
            <person name="Malyavko A.N."/>
            <person name="Meerson M.B."/>
            <person name="Zatsepin T.S."/>
            <person name="Naraykina Y.V."/>
            <person name="Beletsky A.V."/>
            <person name="Ravin N.V."/>
            <person name="Dontsova O.A."/>
        </authorList>
    </citation>
    <scope>FUNCTION</scope>
</reference>
<reference key="23">
    <citation type="journal article" date="2024" name="Mol. Cell">
        <title>Cytoplasmic binding partners of the Integrator endonuclease INTS11 and its paralog CPSF73 are required for their nuclear function.</title>
        <authorList>
            <person name="Lin M.H."/>
            <person name="Jensen M.K."/>
            <person name="Elrod N.D."/>
            <person name="Chu H.F."/>
            <person name="Haseley M."/>
            <person name="Beam A.C."/>
            <person name="Huang K.L."/>
            <person name="Chiang W."/>
            <person name="Russell W.K."/>
            <person name="Williams K."/>
            <person name="Proschel C."/>
            <person name="Wagner E.J."/>
            <person name="Tong L."/>
        </authorList>
    </citation>
    <scope>IDENTIFICATION IN THE INTEGRATOR COMPLEX</scope>
    <scope>SUBCELLULAR LOCATION</scope>
</reference>
<reference key="24">
    <citation type="journal article" date="2017" name="PLoS Genet.">
        <title>Human mutations in integrator complex subunits link transcriptome integrity to brain development.</title>
        <authorList>
            <person name="Oegema R."/>
            <person name="Baillat D."/>
            <person name="Schot R."/>
            <person name="van Unen L.M."/>
            <person name="Brooks A."/>
            <person name="Kia S.K."/>
            <person name="Hoogeboom A.J.M."/>
            <person name="Xia Z."/>
            <person name="Li W."/>
            <person name="Cesaroni M."/>
            <person name="Lequin M.H."/>
            <person name="van Slegtenhorst M."/>
            <person name="Dobyns W.B."/>
            <person name="de Coo I.F.M."/>
            <person name="Verheijen F.W."/>
            <person name="Kremer A."/>
            <person name="van der Spek P.J."/>
            <person name="Heijsman D."/>
            <person name="Wagner E.J."/>
            <person name="Fornerod M."/>
            <person name="Mancini G.M.S."/>
        </authorList>
    </citation>
    <scope>INVOLVEMENT IN NDCAGF</scope>
    <scope>VARIANT NDCAGF 1784-SER--MET-2190 DEL</scope>
    <scope>CHARACTERIZATION OF VARIANT NEDBAF 1784-SER--MET-2190 DEL</scope>
</reference>
<reference key="25">
    <citation type="journal article" date="2018" name="Nucleic Acids Res.">
        <title>Integrator subunit 4 is a 'Symplekin-like' scaffold that associates with INTS9/11 to form the Integrator cleavage module.</title>
        <authorList>
            <person name="Albrecht T.R."/>
            <person name="Shevtsov S.P."/>
            <person name="Wu Y."/>
            <person name="Mascibroda L.G."/>
            <person name="Peart N.J."/>
            <person name="Huang K.L."/>
            <person name="Sawyer I.A."/>
            <person name="Tong L."/>
            <person name="Dundr M."/>
            <person name="Wagner E.J."/>
        </authorList>
    </citation>
    <scope>SUBCELLULAR LOCATION</scope>
    <scope>IDENTIFICATION IN THE INTEGRATOR COMPLEX</scope>
</reference>
<reference evidence="23" key="26">
    <citation type="journal article" date="2020" name="Science">
        <title>Identification of Integrator-PP2A complex (INTAC), an RNA polymerase II phosphatase.</title>
        <authorList>
            <person name="Zheng H."/>
            <person name="Qi Y."/>
            <person name="Hu S."/>
            <person name="Cao X."/>
            <person name="Xu C."/>
            <person name="Yin Z."/>
            <person name="Chen X."/>
            <person name="Li Y."/>
            <person name="Liu W."/>
            <person name="Li J."/>
            <person name="Wang J."/>
            <person name="Wei G."/>
            <person name="Liang K."/>
            <person name="Chen F.X."/>
            <person name="Xu Y."/>
        </authorList>
    </citation>
    <scope>STRUCTURE BY ELECTRON MICROSCOPY (3.50 ANGSTROMS) OF INTAC COMPLEX</scope>
    <scope>FUNCTION</scope>
    <scope>IDENTIFICATION IN THE INTAC COMPLEX</scope>
</reference>
<reference evidence="24" key="27">
    <citation type="journal article" date="2021" name="Science">
        <title>Structural basis of Integrator-mediated transcription regulation.</title>
        <authorList>
            <person name="Fianu I."/>
            <person name="Chen Y."/>
            <person name="Dienemann C."/>
            <person name="Dybkov O."/>
            <person name="Linden A."/>
            <person name="Urlaub H."/>
            <person name="Cramer P."/>
        </authorList>
    </citation>
    <scope>STRUCTURE BY ELECTRON MICROSCOPY (3.60 ANGSTROMS) OF INTEGRATOR COMPLEX</scope>
    <scope>IDENTIFICATION IN THE INTEGRATOR COMPLEX</scope>
</reference>
<reference evidence="25" key="28">
    <citation type="journal article" date="2023" name="Protein Cell">
        <title>Structural basis of INTAC-regulated transcription.</title>
        <authorList>
            <person name="Zheng H."/>
            <person name="Jin Q."/>
            <person name="Wang X."/>
            <person name="Qi Y."/>
            <person name="Liu W."/>
            <person name="Ren Y."/>
            <person name="Zhao D."/>
            <person name="Xavier Chen F."/>
            <person name="Cheng J."/>
            <person name="Chen X."/>
            <person name="Xu Y."/>
        </authorList>
    </citation>
    <scope>STRUCTURE BY ELECTRON MICROSCOPY (4.18 ANGSTROMS) OF INTAC COMPLEX</scope>
</reference>
<reference evidence="26 27 28" key="29">
    <citation type="journal article" date="2024" name="Nature">
        <title>Structural basis of Integrator-dependent RNA polymerase II termination.</title>
        <authorList>
            <person name="Fianu I."/>
            <person name="Ochmann M."/>
            <person name="Walshe J.L."/>
            <person name="Dybkov O."/>
            <person name="Cruz J.N."/>
            <person name="Urlaub H."/>
            <person name="Cramer P."/>
        </authorList>
    </citation>
    <scope>STRUCTURE BY ELECTRON MICROSCOPY (3.10 ANGSTROMS) OF INTAC COMPLEX</scope>
    <scope>FUNCTION</scope>
    <scope>IDENTIFICATION IN THE INTAC COMPLEX</scope>
</reference>
<reference key="30">
    <citation type="journal article" date="2019" name="Eur. J. Hum. Genet.">
        <title>Biallelic sequence variants in INTS1 in patients with developmental delays, cataracts, and craniofacial anomalies.</title>
        <authorList>
            <consortium name="Care 4 Rare Canada Consortium"/>
            <person name="Krall M."/>
            <person name="Htun S."/>
            <person name="Schnur R.E."/>
            <person name="Brooks A.S."/>
            <person name="Baker L."/>
            <person name="de Alba Campomanes A."/>
            <person name="Lamont R.E."/>
            <person name="Gripp K.W."/>
            <person name="Schneidman-Duhovny D."/>
            <person name="Innes A.M."/>
            <person name="Mancini G.M.S."/>
            <person name="Slavotinek A.M."/>
        </authorList>
    </citation>
    <scope>VARIANTS NDCAGF CYS-77; LEU-1874 AND PRO-2164</scope>
</reference>
<reference key="31">
    <citation type="journal article" date="2020" name="J. Mol. Neurosci.">
        <title>Biallelic INTS1 mutations cause a rare neurodevelopmental disorder in two Chinese siblings.</title>
        <authorList>
            <person name="Zhang X."/>
            <person name="Wang Y."/>
            <person name="Yang F."/>
            <person name="Tang J."/>
            <person name="Xu X."/>
            <person name="Yang L."/>
            <person name="Yang X.A."/>
            <person name="Wu D."/>
        </authorList>
    </citation>
    <scope>VARIANTS NDCAGF VAL-549 AND 1961-GLN--MET-2190 DEL</scope>
</reference>
<evidence type="ECO:0000250" key="1">
    <source>
        <dbReference type="UniProtKB" id="Q6P4S8"/>
    </source>
</evidence>
<evidence type="ECO:0000255" key="2"/>
<evidence type="ECO:0000256" key="3">
    <source>
        <dbReference type="SAM" id="MobiDB-lite"/>
    </source>
</evidence>
<evidence type="ECO:0000269" key="4">
    <source>
    </source>
</evidence>
<evidence type="ECO:0000269" key="5">
    <source>
    </source>
</evidence>
<evidence type="ECO:0000269" key="6">
    <source>
    </source>
</evidence>
<evidence type="ECO:0000269" key="7">
    <source>
    </source>
</evidence>
<evidence type="ECO:0000269" key="8">
    <source>
    </source>
</evidence>
<evidence type="ECO:0000269" key="9">
    <source>
    </source>
</evidence>
<evidence type="ECO:0000269" key="10">
    <source>
    </source>
</evidence>
<evidence type="ECO:0000269" key="11">
    <source>
    </source>
</evidence>
<evidence type="ECO:0000269" key="12">
    <source>
    </source>
</evidence>
<evidence type="ECO:0000269" key="13">
    <source>
    </source>
</evidence>
<evidence type="ECO:0000269" key="14">
    <source>
    </source>
</evidence>
<evidence type="ECO:0000269" key="15">
    <source>
    </source>
</evidence>
<evidence type="ECO:0000269" key="16">
    <source>
    </source>
</evidence>
<evidence type="ECO:0000269" key="17">
    <source>
    </source>
</evidence>
<evidence type="ECO:0000303" key="18">
    <source>
    </source>
</evidence>
<evidence type="ECO:0000303" key="19">
    <source>
    </source>
</evidence>
<evidence type="ECO:0000303" key="20">
    <source>
    </source>
</evidence>
<evidence type="ECO:0000305" key="21"/>
<evidence type="ECO:0000312" key="22">
    <source>
        <dbReference type="HGNC" id="HGNC:24555"/>
    </source>
</evidence>
<evidence type="ECO:0007744" key="23">
    <source>
        <dbReference type="PDB" id="7CUN"/>
    </source>
</evidence>
<evidence type="ECO:0007744" key="24">
    <source>
        <dbReference type="PDB" id="7PKS"/>
    </source>
</evidence>
<evidence type="ECO:0007744" key="25">
    <source>
        <dbReference type="PDB" id="7YCX"/>
    </source>
</evidence>
<evidence type="ECO:0007744" key="26">
    <source>
        <dbReference type="PDB" id="8RBX"/>
    </source>
</evidence>
<evidence type="ECO:0007744" key="27">
    <source>
        <dbReference type="PDB" id="8RBZ"/>
    </source>
</evidence>
<evidence type="ECO:0007744" key="28">
    <source>
        <dbReference type="PDB" id="8RC4"/>
    </source>
</evidence>
<evidence type="ECO:0007744" key="29">
    <source>
    </source>
</evidence>
<evidence type="ECO:0007744" key="30">
    <source>
    </source>
</evidence>
<evidence type="ECO:0007744" key="31">
    <source>
    </source>
</evidence>
<evidence type="ECO:0007744" key="32">
    <source>
    </source>
</evidence>
<evidence type="ECO:0007744" key="33">
    <source>
    </source>
</evidence>
<evidence type="ECO:0007829" key="34">
    <source>
        <dbReference type="PDB" id="7CUN"/>
    </source>
</evidence>
<evidence type="ECO:0007829" key="35">
    <source>
        <dbReference type="PDB" id="8RC4"/>
    </source>
</evidence>
<sequence>MNRAKPTTVRRPSAAAKPSGHPPPGDFIALGSKGQANESKTASTLLKPAPSGLPSERKRDAAAALSSASALTGLTKRPKLSSTPPLSALGRLAEAAVAEKRAISPSIKEPSVVPIEVLPTVLLDEIEAAELEGNDDRIEGVLCGAVKQLKVTRAKPDSTLYLSLMYLAKIKPNIFATEGVIEALCSLLRRDASINFKAKGNSLVSVLACNLLMAAYEEDENWPEIFVKVYIEDSLGERIWVDSPHCKTFVDNIQTAFNTRMPPRSVLLQGEAGRVAGDLGAGSSPHPSLTEEEDSQTELLIAEEKLSPEQEGQLMPRYEELAESVEEYVLDMLRDQLNRRQPIDNVSRNLLRLLTSTCGYKEVRLLAVQKLEMWLQNPKLTRPAQDLLMSVCMNCNTHGSEDMDVISHLIKIRLKPKVLLNHFMLCIRELLSAHKDNLGTTIKLVIFNELSSARNPNNMQVLYTALQHSSELAPKFLAMVFQDLLTNKDDYLRASRALLREIIKQTKHEINFQAFCLGLMQERKEPQYLEMEFKERFVVHITDVLAVSMMLGITAQVKEAGIAWDKGEKRNLEVLRSFQNQIAAIQRDAVWWLHTVVPSISKLAPKDYVHCLHKVLFTEQPETYYKWDNWPPESDRNFFLRLCSEVPILEDTLMRILVIGLSRELPLGPADAMELADHLVKRAAAVQADDVEVLKVGRTQLIDAVLNLCTYHHPENIQLPPGYQPPNLAISTLYWKAWPLLLVVAAFNPENIGLAAWEEYPTLKMLMEMVMTNNYSYPPCTLTDEETRTEMLNRELQTAQREKQEILAFEGHLAAASTKQTITESSSLLLSQLTSLDPQGPPRRPPPHILDQVKSLNQSLRLGHLLCRSRNPDFLLHIIQRQASSQSMPWLADLVQSSEGSLDVLPVQCLCEFLLHDAVDDAASGEEDDEGESKEQKAKKRQRQQKQRQLLGRLQDLLLGPKADEQTTCEVLDYFLRRLGSSQVASRVLAMKGLSLVLSEGSLRDGEEKEPPMEEDVGDTDVLQGYQWLLRDLPRLPLFDSVRSTTALALQQAIHMETDPQTISAYLIYLSQHTPVEEQAQHSDLALDVARLVVERSTIMSHLFSKLSPSAASDAVLSALLSIFSRYVRRMRQSKEGEEVYSWSESQDQVFLRWSSGETATMHILVVHAMVILLTLGPPRADDSEFQALLDIWFPEEKPLPTAFLVDTSEEALLLPDWLKLRMIRSEVLRLVDAALQDLEPQQLLLFVQSFGIPVSSMSKLLQFLDQAVAHDPQTLEQNIMDKNYMAHLVEVQHERGASGGQTFHSLLTASLPPRRDSTEAPKPKSSPEQPIGQGRIRVGTQLRVLGPEDDLAGMFLQIFPLSPDPRWQSSSPRPVALALQQALGQELARVVQGSPEVPGITVRVLQALATLLSSPHGGALVMSMHRSHFLACPLLRQLCQYQRCVPQDTGFSSLFLKVLLQMLQWLDSPGVEGGPLRAQLRMLASQASAGRRLSDVRGGLLRLAEALAFRQDLEVVSSTVRAVIATLRSGEQCSVEPDLISKVLQGLIEVRSPHLEELLTAFFSATADAASPFPACKPVVVVSSLLLQEEEPLAGGKPGADGGSLEAVRLGPSSGLLVDWLEMLDPEVVSSCPDLQLRLLFSRRKGKGQAQVPSFRPYLLTLFTHQSSWPTLHQCIRVLLGKSREQRFDPSASLDFLWACIHVPRIWQGRDQRTPQKRREELVLRVQGPELISLVELILAEAETRSQDGDTAACSLIQARLPLLLSCCCGDDESVRKVTEHLSGCIQQWGDSVLGRRCRDLLLQLYLQRPELRVPVPEVLLHSEGAASSSVCKLDGLIHRFITLLADTSDSRALENRGADASMACRKLAVAHPLLLLRHLPMIAALLHGRTHLNFQEFRQQNHLSCFLHVLGLLELLQPHVFRSEHQGALWDCLLSFIRLLLNYRKSSRHLAAFINKFVQFIHKYITYNAPAAISFLQKHADPLHDLSFDNSDLVMLKSLLAGLSLPSRDDRTDRGLDEEGEEESSAGSLPLVSVSLFTPLTAAEMAPYMKRLSRGQTVEDLLEVLSDIDEMSRRRPEILSFFSTNLQRLMSSAEECCRNLAFSLALRSMQNSPSIAAAFLPTFMYCLGSQDFEVVQTALRNLPEYALLCQEHAAVLLHRAFLVGMYGQMDPSAQISEALRILHMEAVM</sequence>
<comment type="function">
    <text evidence="4 5 6 7 11 13 16">Component of the integrator complex, a multiprotein complex that terminates RNA polymerase II (Pol II) transcription in the promoter-proximal region of genes (PubMed:25201415, PubMed:33243860, PubMed:38570683). The integrator complex provides a quality checkpoint during transcription elongation by driving premature transcription termination of transcripts that are unfavorably configured for transcriptional elongation: the complex terminates transcription by (1) catalyzing dephosphorylation of the C-terminal domain (CTD) of Pol II subunit POLR2A/RPB1 and SUPT5H/SPT5, (2) degrading the exiting nascent RNA transcript via endonuclease activity and (3) promoting the release of Pol II from bound DNA (PubMed:33243860). The integrator complex is also involved in terminating the synthesis of non-coding Pol II transcripts, such as enhancer RNAs (eRNAs), small nuclear RNAs (snRNAs), telomerase RNAs and long non-coding RNAs (lncRNAs) (PubMed:16239144, PubMed:26308897, PubMed:30737432). Within the integrator complex, INTS1 is involved in the post-termination step: INTS1 displaces INTS3 and the SOSS factors, allowing the integrator complex to return to the closed conformation, ready to bind to the paused elongation complex for another termination cycle (PubMed:38570683). Mediates recruitment of cytoplasmic dynein to the nuclear envelope, probably as component of the integrator complex (PubMed:23904267).</text>
</comment>
<comment type="subunit">
    <text evidence="1 4 6 9 13 14 15 16 17">Component of the Integrator complex, composed of core subunits INTS1, INTS2, INTS3, INTS4, INTS5, INTS6, INTS7, INTS8, INTS9/RC74, INTS10, INTS11/CPSF3L, INTS12, INTS13, INTS14 and INTS15 (PubMed:16239144, PubMed:25201415, PubMed:29471365, PubMed:33243860, PubMed:34762484, PubMed:38570683, PubMed:39032490). The core complex associates with protein phosphatase 2A subunits PPP2CA and PPP2R1A, to form the Integrator-PP2A (INTAC) complex (PubMed:33243860, PubMed:34762484, PubMed:36869814, PubMed:38570683). Interacts with ESRRB, ESRRB is not a core component of the Integrator complex and this association is a bridge for the interaction with the multiprotein complex Integrator; attracts the transcriptional machinery (By similarity).</text>
</comment>
<comment type="interaction">
    <interactant intactId="EBI-724549">
        <id>Q8N201</id>
    </interactant>
    <interactant intactId="EBI-1049156">
        <id>Q96CB8</id>
        <label>INTS12</label>
    </interactant>
    <organismsDiffer>false</organismsDiffer>
    <experiments>2</experiments>
</comment>
<comment type="subcellular location">
    <subcellularLocation>
        <location evidence="9 17">Nucleus</location>
    </subcellularLocation>
    <subcellularLocation>
        <location evidence="21">Nucleus membrane</location>
        <topology evidence="2">Single-pass membrane protein</topology>
    </subcellularLocation>
</comment>
<comment type="disease" evidence="8 10 12">
    <disease id="DI-05656">
        <name>Neurodevelopmental disorder with cataracts, poor growth, and dysmorphic facies</name>
        <acronym>NDCAGF</acronym>
        <description>An autosomal recessive neurodevelopmental disorder characterized by severe global developmental delay with motor impairment, cognitive delays, absent or severely limited speech, dysmorphic features, hypotonia and cataracts.</description>
        <dbReference type="MIM" id="618571"/>
    </disease>
    <text>The disease is caused by variants affecting the gene represented in this entry.</text>
</comment>
<comment type="similarity">
    <text evidence="21">Belongs to the Integrator subunit 1 family.</text>
</comment>
<comment type="sequence caution" evidence="21">
    <conflict type="erroneous initiation">
        <sequence resource="EMBL-CDS" id="AAQ88846"/>
    </conflict>
    <text>Truncated N-terminus.</text>
</comment>
<dbReference type="EMBL" id="AC102953">
    <property type="status" value="NOT_ANNOTATED_CDS"/>
    <property type="molecule type" value="Genomic_DNA"/>
</dbReference>
<dbReference type="EMBL" id="AC093734">
    <property type="status" value="NOT_ANNOTATED_CDS"/>
    <property type="molecule type" value="Genomic_DNA"/>
</dbReference>
<dbReference type="EMBL" id="AB037861">
    <property type="protein sequence ID" value="BAA92678.1"/>
    <property type="molecule type" value="mRNA"/>
</dbReference>
<dbReference type="EMBL" id="AY358482">
    <property type="protein sequence ID" value="AAQ88846.1"/>
    <property type="status" value="ALT_INIT"/>
    <property type="molecule type" value="mRNA"/>
</dbReference>
<dbReference type="EMBL" id="BC013367">
    <property type="protein sequence ID" value="AAH13367.2"/>
    <property type="molecule type" value="mRNA"/>
</dbReference>
<dbReference type="EMBL" id="BC018777">
    <property type="protein sequence ID" value="AAH18777.1"/>
    <property type="molecule type" value="mRNA"/>
</dbReference>
<dbReference type="EMBL" id="BC069262">
    <property type="protein sequence ID" value="AAH69262.1"/>
    <property type="molecule type" value="mRNA"/>
</dbReference>
<dbReference type="EMBL" id="AL050110">
    <property type="protein sequence ID" value="CAB43278.2"/>
    <property type="molecule type" value="mRNA"/>
</dbReference>
<dbReference type="EMBL" id="AL137358">
    <property type="protein sequence ID" value="CAB70710.3"/>
    <property type="molecule type" value="mRNA"/>
</dbReference>
<dbReference type="EMBL" id="BK005720">
    <property type="protein sequence ID" value="DAA05720.1"/>
    <property type="molecule type" value="mRNA"/>
</dbReference>
<dbReference type="CCDS" id="CCDS47526.1"/>
<dbReference type="PIR" id="T08758">
    <property type="entry name" value="T08758"/>
</dbReference>
<dbReference type="PIR" id="T46429">
    <property type="entry name" value="T46429"/>
</dbReference>
<dbReference type="RefSeq" id="NP_001073922.2">
    <property type="nucleotide sequence ID" value="NM_001080453.3"/>
</dbReference>
<dbReference type="RefSeq" id="XP_054213832.1">
    <property type="nucleotide sequence ID" value="XM_054357857.1"/>
</dbReference>
<dbReference type="PDB" id="7CUN">
    <property type="method" value="EM"/>
    <property type="resolution" value="3.50 A"/>
    <property type="chains" value="A=1-2190"/>
</dbReference>
<dbReference type="PDB" id="7PKS">
    <property type="method" value="EM"/>
    <property type="resolution" value="3.60 A"/>
    <property type="chains" value="a=1-2190"/>
</dbReference>
<dbReference type="PDB" id="7YCX">
    <property type="method" value="EM"/>
    <property type="resolution" value="4.18 A"/>
    <property type="chains" value="A=1-2190"/>
</dbReference>
<dbReference type="PDB" id="8RBX">
    <property type="method" value="EM"/>
    <property type="resolution" value="4.10 A"/>
    <property type="chains" value="a=1-2190"/>
</dbReference>
<dbReference type="PDB" id="8RBZ">
    <property type="method" value="EM"/>
    <property type="resolution" value="3.70 A"/>
    <property type="chains" value="a=1-2190"/>
</dbReference>
<dbReference type="PDB" id="8RC4">
    <property type="method" value="EM"/>
    <property type="resolution" value="3.10 A"/>
    <property type="chains" value="a=1-2190"/>
</dbReference>
<dbReference type="PDB" id="8YJB">
    <property type="method" value="EM"/>
    <property type="resolution" value="4.10 A"/>
    <property type="chains" value="A=1-2190"/>
</dbReference>
<dbReference type="PDBsum" id="7CUN"/>
<dbReference type="PDBsum" id="7PKS"/>
<dbReference type="PDBsum" id="7YCX"/>
<dbReference type="PDBsum" id="8RBX"/>
<dbReference type="PDBsum" id="8RBZ"/>
<dbReference type="PDBsum" id="8RC4"/>
<dbReference type="PDBsum" id="8YJB"/>
<dbReference type="EMDB" id="EMD-13479"/>
<dbReference type="EMDB" id="EMD-19038"/>
<dbReference type="EMDB" id="EMD-19040"/>
<dbReference type="EMDB" id="EMD-19047"/>
<dbReference type="EMDB" id="EMD-30473"/>
<dbReference type="EMDB" id="EMD-33741"/>
<dbReference type="EMDB" id="EMD-39338"/>
<dbReference type="SMR" id="Q8N201"/>
<dbReference type="BioGRID" id="117596">
    <property type="interactions" value="193"/>
</dbReference>
<dbReference type="ComplexPortal" id="CPX-6441">
    <property type="entry name" value="Integrator complex"/>
</dbReference>
<dbReference type="CORUM" id="Q8N201"/>
<dbReference type="DIP" id="DIP-48476N"/>
<dbReference type="FunCoup" id="Q8N201">
    <property type="interactions" value="2595"/>
</dbReference>
<dbReference type="IntAct" id="Q8N201">
    <property type="interactions" value="131"/>
</dbReference>
<dbReference type="MINT" id="Q8N201"/>
<dbReference type="STRING" id="9606.ENSP00000385722"/>
<dbReference type="GlyGen" id="Q8N201">
    <property type="glycosylation" value="2 sites, 1 N-linked glycan (1 site), 1 O-linked glycan (1 site)"/>
</dbReference>
<dbReference type="iPTMnet" id="Q8N201"/>
<dbReference type="PhosphoSitePlus" id="Q8N201"/>
<dbReference type="SwissPalm" id="Q8N201"/>
<dbReference type="BioMuta" id="INTS1"/>
<dbReference type="DMDM" id="97052424"/>
<dbReference type="jPOST" id="Q8N201"/>
<dbReference type="MassIVE" id="Q8N201"/>
<dbReference type="PaxDb" id="9606-ENSP00000385722"/>
<dbReference type="PeptideAtlas" id="Q8N201"/>
<dbReference type="ProteomicsDB" id="71646"/>
<dbReference type="Pumba" id="Q8N201"/>
<dbReference type="Antibodypedia" id="5500">
    <property type="antibodies" value="97 antibodies from 18 providers"/>
</dbReference>
<dbReference type="DNASU" id="26173"/>
<dbReference type="Ensembl" id="ENST00000404767.8">
    <property type="protein sequence ID" value="ENSP00000385722.3"/>
    <property type="gene ID" value="ENSG00000164880.16"/>
</dbReference>
<dbReference type="GeneID" id="26173"/>
<dbReference type="KEGG" id="hsa:26173"/>
<dbReference type="MANE-Select" id="ENST00000404767.8">
    <property type="protein sequence ID" value="ENSP00000385722.3"/>
    <property type="RefSeq nucleotide sequence ID" value="NM_001080453.3"/>
    <property type="RefSeq protein sequence ID" value="NP_001073922.2"/>
</dbReference>
<dbReference type="UCSC" id="uc003skn.3">
    <property type="organism name" value="human"/>
</dbReference>
<dbReference type="AGR" id="HGNC:24555"/>
<dbReference type="CTD" id="26173"/>
<dbReference type="DisGeNET" id="26173"/>
<dbReference type="GeneCards" id="INTS1"/>
<dbReference type="HGNC" id="HGNC:24555">
    <property type="gene designation" value="INTS1"/>
</dbReference>
<dbReference type="HPA" id="ENSG00000164880">
    <property type="expression patterns" value="Low tissue specificity"/>
</dbReference>
<dbReference type="MalaCards" id="INTS1"/>
<dbReference type="MIM" id="611345">
    <property type="type" value="gene"/>
</dbReference>
<dbReference type="MIM" id="618571">
    <property type="type" value="phenotype"/>
</dbReference>
<dbReference type="neXtProt" id="NX_Q8N201"/>
<dbReference type="OpenTargets" id="ENSG00000164880"/>
<dbReference type="PharmGKB" id="PA144596420"/>
<dbReference type="VEuPathDB" id="HostDB:ENSG00000164880"/>
<dbReference type="eggNOG" id="KOG4596">
    <property type="taxonomic scope" value="Eukaryota"/>
</dbReference>
<dbReference type="GeneTree" id="ENSGT00390000015743"/>
<dbReference type="HOGENOM" id="CLU_001690_0_0_1"/>
<dbReference type="InParanoid" id="Q8N201"/>
<dbReference type="OMA" id="CSEFRFY"/>
<dbReference type="OrthoDB" id="19938at2759"/>
<dbReference type="PAN-GO" id="Q8N201">
    <property type="GO annotations" value="2 GO annotations based on evolutionary models"/>
</dbReference>
<dbReference type="PhylomeDB" id="Q8N201"/>
<dbReference type="TreeFam" id="TF313809"/>
<dbReference type="PathwayCommons" id="Q8N201"/>
<dbReference type="Reactome" id="R-HSA-6807505">
    <property type="pathway name" value="RNA polymerase II transcribes snRNA genes"/>
</dbReference>
<dbReference type="SignaLink" id="Q8N201"/>
<dbReference type="SIGNOR" id="Q8N201"/>
<dbReference type="BioGRID-ORCS" id="26173">
    <property type="hits" value="673 hits in 1158 CRISPR screens"/>
</dbReference>
<dbReference type="ChiTaRS" id="INTS1">
    <property type="organism name" value="human"/>
</dbReference>
<dbReference type="GenomeRNAi" id="26173"/>
<dbReference type="Pharos" id="Q8N201">
    <property type="development level" value="Tbio"/>
</dbReference>
<dbReference type="PRO" id="PR:Q8N201"/>
<dbReference type="Proteomes" id="UP000005640">
    <property type="component" value="Chromosome 7"/>
</dbReference>
<dbReference type="RNAct" id="Q8N201">
    <property type="molecule type" value="protein"/>
</dbReference>
<dbReference type="Bgee" id="ENSG00000164880">
    <property type="expression patterns" value="Expressed in left testis and 187 other cell types or tissues"/>
</dbReference>
<dbReference type="ExpressionAtlas" id="Q8N201">
    <property type="expression patterns" value="baseline and differential"/>
</dbReference>
<dbReference type="GO" id="GO:0160232">
    <property type="term" value="C:INTAC complex"/>
    <property type="evidence" value="ECO:0000314"/>
    <property type="project" value="UniProtKB"/>
</dbReference>
<dbReference type="GO" id="GO:0032039">
    <property type="term" value="C:integrator complex"/>
    <property type="evidence" value="ECO:0000314"/>
    <property type="project" value="UniProtKB"/>
</dbReference>
<dbReference type="GO" id="GO:0016020">
    <property type="term" value="C:membrane"/>
    <property type="evidence" value="ECO:0007005"/>
    <property type="project" value="UniProtKB"/>
</dbReference>
<dbReference type="GO" id="GO:0031965">
    <property type="term" value="C:nuclear membrane"/>
    <property type="evidence" value="ECO:0007669"/>
    <property type="project" value="UniProtKB-SubCell"/>
</dbReference>
<dbReference type="GO" id="GO:0005654">
    <property type="term" value="C:nucleoplasm"/>
    <property type="evidence" value="ECO:0000304"/>
    <property type="project" value="Reactome"/>
</dbReference>
<dbReference type="GO" id="GO:0005634">
    <property type="term" value="C:nucleus"/>
    <property type="evidence" value="ECO:0000314"/>
    <property type="project" value="UniProtKB"/>
</dbReference>
<dbReference type="GO" id="GO:0007566">
    <property type="term" value="P:embryo implantation"/>
    <property type="evidence" value="ECO:0007669"/>
    <property type="project" value="Ensembl"/>
</dbReference>
<dbReference type="GO" id="GO:0001833">
    <property type="term" value="P:inner cell mass cell proliferation"/>
    <property type="evidence" value="ECO:0007669"/>
    <property type="project" value="Ensembl"/>
</dbReference>
<dbReference type="GO" id="GO:0043066">
    <property type="term" value="P:negative regulation of apoptotic process"/>
    <property type="evidence" value="ECO:0007669"/>
    <property type="project" value="Ensembl"/>
</dbReference>
<dbReference type="GO" id="GO:0034243">
    <property type="term" value="P:regulation of transcription elongation by RNA polymerase II"/>
    <property type="evidence" value="ECO:0000303"/>
    <property type="project" value="ComplexPortal"/>
</dbReference>
<dbReference type="GO" id="GO:0160240">
    <property type="term" value="P:RNA polymerase II transcription initiation surveillance"/>
    <property type="evidence" value="ECO:0000314"/>
    <property type="project" value="UniProtKB"/>
</dbReference>
<dbReference type="GO" id="GO:0016180">
    <property type="term" value="P:snRNA processing"/>
    <property type="evidence" value="ECO:0000314"/>
    <property type="project" value="HGNC-UCL"/>
</dbReference>
<dbReference type="GO" id="GO:0034474">
    <property type="term" value="P:U2 snRNA 3'-end processing"/>
    <property type="evidence" value="ECO:0000318"/>
    <property type="project" value="GO_Central"/>
</dbReference>
<dbReference type="InterPro" id="IPR016024">
    <property type="entry name" value="ARM-type_fold"/>
</dbReference>
<dbReference type="InterPro" id="IPR053964">
    <property type="entry name" value="INT1_R3"/>
</dbReference>
<dbReference type="InterPro" id="IPR038902">
    <property type="entry name" value="INTS1"/>
</dbReference>
<dbReference type="InterPro" id="IPR053966">
    <property type="entry name" value="INTS1_INTS2-bd"/>
</dbReference>
<dbReference type="InterPro" id="IPR053965">
    <property type="entry name" value="INTS1_R4"/>
</dbReference>
<dbReference type="InterPro" id="IPR022145">
    <property type="entry name" value="INTS1_RPB2-bd"/>
</dbReference>
<dbReference type="PANTHER" id="PTHR21224">
    <property type="entry name" value="INTEGRATOR COMPLEX SUBUNIT 1"/>
    <property type="match status" value="1"/>
</dbReference>
<dbReference type="PANTHER" id="PTHR21224:SF1">
    <property type="entry name" value="INTEGRATOR COMPLEX SUBUNIT 1"/>
    <property type="match status" value="1"/>
</dbReference>
<dbReference type="Pfam" id="PF22927">
    <property type="entry name" value="INT1_R3"/>
    <property type="match status" value="1"/>
</dbReference>
<dbReference type="Pfam" id="PF22929">
    <property type="entry name" value="INTS1_INTS2-bd"/>
    <property type="match status" value="1"/>
</dbReference>
<dbReference type="Pfam" id="PF22928">
    <property type="entry name" value="INTS1_R4"/>
    <property type="match status" value="1"/>
</dbReference>
<dbReference type="Pfam" id="PF12432">
    <property type="entry name" value="INTS1_RP2B-bd"/>
    <property type="match status" value="1"/>
</dbReference>
<dbReference type="SUPFAM" id="SSF48371">
    <property type="entry name" value="ARM repeat"/>
    <property type="match status" value="1"/>
</dbReference>
<proteinExistence type="evidence at protein level"/>
<gene>
    <name evidence="20 22" type="primary">INTS1</name>
    <name evidence="18" type="synonym">KIAA1440</name>
    <name evidence="19" type="ORF">UNQ1821/PRO3434</name>
</gene>